<accession>P58482</accession>
<accession>Q0WCG1</accession>
<sequence length="622" mass="70786">MKGQETRGFQSEVKQLLHLMIHSLYSNKEIFLRELISNASDAADKLRFRALSNPELFEGDGELRVRLSFDKEKRTLTLSDNGIGMTRDEVIDNLGTIAKSGTKAFLESIGSDQAKDSQLIGQFGVGFYSAFIVADKVTVRTRAAGAPADTGVFWESAGEGDYTIADITKDERGTEITLHLREGEDEYLDDWRLRSVISKYSDHIALPVEIQVKNEEDGTVTWEKINKAQALWTRGKAEISDDEYKAFYKHIAHDFTDPLSWSHNRVEGKQEYTSLLYIPAQAPWDMWNRDHKHGLKLYVQRVFIMDEAEQFMPNYLRFVRGLIDSNDLPLNVSREILQDSRITQNLRSALTKRVLQMLEKLAKDDAEKYQQFWQQFGMALKEGPAEDGSNKETIAKLLRFASTHTDSSAQTVSLEDYVSRMAEGQEKIYYITADSYAAAKSSPHLELFRKKGIEVLLLSDRIDEWMMSYLTEFEGKAFQSVSKADDSLNKLADEENPEQQEAEKALEPFVERVKTLLGERVKDVRLTHRLTDTPAIVTTDADEMSTQMAKLFAAAGQQAPEVKYIFELNPDHGLVKRAAEVTDDTQFAQWVELLLDQALLAERGTLEDPNQFIRRMNQLLTA</sequence>
<dbReference type="EMBL" id="AL590842">
    <property type="protein sequence ID" value="CAL21715.1"/>
    <property type="status" value="ALT_INIT"/>
    <property type="molecule type" value="Genomic_DNA"/>
</dbReference>
<dbReference type="EMBL" id="AE009952">
    <property type="protein sequence ID" value="AAM84645.1"/>
    <property type="status" value="ALT_INIT"/>
    <property type="molecule type" value="Genomic_DNA"/>
</dbReference>
<dbReference type="EMBL" id="AE017042">
    <property type="protein sequence ID" value="AAS61076.1"/>
    <property type="status" value="ALT_INIT"/>
    <property type="molecule type" value="Genomic_DNA"/>
</dbReference>
<dbReference type="PIR" id="AH0378">
    <property type="entry name" value="AH0378"/>
</dbReference>
<dbReference type="RefSeq" id="YP_002348027.1">
    <property type="nucleotide sequence ID" value="NC_003143.1"/>
</dbReference>
<dbReference type="SMR" id="P58482"/>
<dbReference type="STRING" id="214092.YPO3119"/>
<dbReference type="PaxDb" id="214092-YPO3119"/>
<dbReference type="DNASU" id="1146011"/>
<dbReference type="EnsemblBacteria" id="AAS61076">
    <property type="protein sequence ID" value="AAS61076"/>
    <property type="gene ID" value="YP_0811"/>
</dbReference>
<dbReference type="KEGG" id="ype:YPO3119"/>
<dbReference type="KEGG" id="ypj:CH55_1698"/>
<dbReference type="KEGG" id="ypk:y1064"/>
<dbReference type="KEGG" id="ypl:CH46_1980"/>
<dbReference type="KEGG" id="ypm:YP_0811"/>
<dbReference type="KEGG" id="ypv:BZ15_408"/>
<dbReference type="KEGG" id="ypw:CH59_2946"/>
<dbReference type="PATRIC" id="fig|214092.21.peg.3574"/>
<dbReference type="eggNOG" id="COG0326">
    <property type="taxonomic scope" value="Bacteria"/>
</dbReference>
<dbReference type="HOGENOM" id="CLU_006684_3_0_6"/>
<dbReference type="Proteomes" id="UP000000815">
    <property type="component" value="Chromosome"/>
</dbReference>
<dbReference type="Proteomes" id="UP000001019">
    <property type="component" value="Chromosome"/>
</dbReference>
<dbReference type="Proteomes" id="UP000002490">
    <property type="component" value="Chromosome"/>
</dbReference>
<dbReference type="GO" id="GO:0005829">
    <property type="term" value="C:cytosol"/>
    <property type="evidence" value="ECO:0000318"/>
    <property type="project" value="GO_Central"/>
</dbReference>
<dbReference type="GO" id="GO:0005524">
    <property type="term" value="F:ATP binding"/>
    <property type="evidence" value="ECO:0000318"/>
    <property type="project" value="GO_Central"/>
</dbReference>
<dbReference type="GO" id="GO:0016887">
    <property type="term" value="F:ATP hydrolysis activity"/>
    <property type="evidence" value="ECO:0000318"/>
    <property type="project" value="GO_Central"/>
</dbReference>
<dbReference type="GO" id="GO:0140662">
    <property type="term" value="F:ATP-dependent protein folding chaperone"/>
    <property type="evidence" value="ECO:0007669"/>
    <property type="project" value="InterPro"/>
</dbReference>
<dbReference type="GO" id="GO:0051082">
    <property type="term" value="F:unfolded protein binding"/>
    <property type="evidence" value="ECO:0000318"/>
    <property type="project" value="GO_Central"/>
</dbReference>
<dbReference type="GO" id="GO:0006974">
    <property type="term" value="P:DNA damage response"/>
    <property type="evidence" value="ECO:0000318"/>
    <property type="project" value="GO_Central"/>
</dbReference>
<dbReference type="GO" id="GO:0006457">
    <property type="term" value="P:protein folding"/>
    <property type="evidence" value="ECO:0000318"/>
    <property type="project" value="GO_Central"/>
</dbReference>
<dbReference type="GO" id="GO:0009408">
    <property type="term" value="P:response to heat"/>
    <property type="evidence" value="ECO:0000318"/>
    <property type="project" value="GO_Central"/>
</dbReference>
<dbReference type="CDD" id="cd16927">
    <property type="entry name" value="HATPase_Hsp90-like"/>
    <property type="match status" value="1"/>
</dbReference>
<dbReference type="FunFam" id="1.20.120.790:FF:000002">
    <property type="entry name" value="Molecular chaperone HtpG"/>
    <property type="match status" value="1"/>
</dbReference>
<dbReference type="FunFam" id="3.30.230.80:FF:000002">
    <property type="entry name" value="Molecular chaperone HtpG"/>
    <property type="match status" value="1"/>
</dbReference>
<dbReference type="FunFam" id="3.30.565.10:FF:000009">
    <property type="entry name" value="Molecular chaperone HtpG"/>
    <property type="match status" value="1"/>
</dbReference>
<dbReference type="FunFam" id="3.40.50.11260:FF:000002">
    <property type="entry name" value="Molecular chaperone HtpG"/>
    <property type="match status" value="1"/>
</dbReference>
<dbReference type="Gene3D" id="3.30.230.80">
    <property type="match status" value="1"/>
</dbReference>
<dbReference type="Gene3D" id="3.40.50.11260">
    <property type="match status" value="1"/>
</dbReference>
<dbReference type="Gene3D" id="1.20.120.790">
    <property type="entry name" value="Heat shock protein 90, C-terminal domain"/>
    <property type="match status" value="1"/>
</dbReference>
<dbReference type="Gene3D" id="3.30.565.10">
    <property type="entry name" value="Histidine kinase-like ATPase, C-terminal domain"/>
    <property type="match status" value="1"/>
</dbReference>
<dbReference type="HAMAP" id="MF_00505">
    <property type="entry name" value="HSP90"/>
    <property type="match status" value="1"/>
</dbReference>
<dbReference type="InterPro" id="IPR036890">
    <property type="entry name" value="HATPase_C_sf"/>
</dbReference>
<dbReference type="InterPro" id="IPR019805">
    <property type="entry name" value="Heat_shock_protein_90_CS"/>
</dbReference>
<dbReference type="InterPro" id="IPR037196">
    <property type="entry name" value="HSP90_C"/>
</dbReference>
<dbReference type="InterPro" id="IPR001404">
    <property type="entry name" value="Hsp90_fam"/>
</dbReference>
<dbReference type="InterPro" id="IPR020575">
    <property type="entry name" value="Hsp90_N"/>
</dbReference>
<dbReference type="InterPro" id="IPR020568">
    <property type="entry name" value="Ribosomal_Su5_D2-typ_SF"/>
</dbReference>
<dbReference type="NCBIfam" id="NF003555">
    <property type="entry name" value="PRK05218.1"/>
    <property type="match status" value="1"/>
</dbReference>
<dbReference type="PANTHER" id="PTHR11528">
    <property type="entry name" value="HEAT SHOCK PROTEIN 90 FAMILY MEMBER"/>
    <property type="match status" value="1"/>
</dbReference>
<dbReference type="Pfam" id="PF13589">
    <property type="entry name" value="HATPase_c_3"/>
    <property type="match status" value="1"/>
</dbReference>
<dbReference type="Pfam" id="PF00183">
    <property type="entry name" value="HSP90"/>
    <property type="match status" value="1"/>
</dbReference>
<dbReference type="PIRSF" id="PIRSF002583">
    <property type="entry name" value="Hsp90"/>
    <property type="match status" value="1"/>
</dbReference>
<dbReference type="PRINTS" id="PR00775">
    <property type="entry name" value="HEATSHOCK90"/>
</dbReference>
<dbReference type="SMART" id="SM00387">
    <property type="entry name" value="HATPase_c"/>
    <property type="match status" value="1"/>
</dbReference>
<dbReference type="SUPFAM" id="SSF55874">
    <property type="entry name" value="ATPase domain of HSP90 chaperone/DNA topoisomerase II/histidine kinase"/>
    <property type="match status" value="1"/>
</dbReference>
<dbReference type="SUPFAM" id="SSF110942">
    <property type="entry name" value="HSP90 C-terminal domain"/>
    <property type="match status" value="1"/>
</dbReference>
<dbReference type="SUPFAM" id="SSF54211">
    <property type="entry name" value="Ribosomal protein S5 domain 2-like"/>
    <property type="match status" value="1"/>
</dbReference>
<dbReference type="PROSITE" id="PS00298">
    <property type="entry name" value="HSP90"/>
    <property type="match status" value="1"/>
</dbReference>
<protein>
    <recommendedName>
        <fullName evidence="1">Chaperone protein HtpG</fullName>
    </recommendedName>
    <alternativeName>
        <fullName evidence="1">Heat shock protein HtpG</fullName>
    </alternativeName>
    <alternativeName>
        <fullName evidence="1">High temperature protein G</fullName>
    </alternativeName>
</protein>
<name>HTPG_YERPE</name>
<reference key="1">
    <citation type="journal article" date="2001" name="Nature">
        <title>Genome sequence of Yersinia pestis, the causative agent of plague.</title>
        <authorList>
            <person name="Parkhill J."/>
            <person name="Wren B.W."/>
            <person name="Thomson N.R."/>
            <person name="Titball R.W."/>
            <person name="Holden M.T.G."/>
            <person name="Prentice M.B."/>
            <person name="Sebaihia M."/>
            <person name="James K.D."/>
            <person name="Churcher C.M."/>
            <person name="Mungall K.L."/>
            <person name="Baker S."/>
            <person name="Basham D."/>
            <person name="Bentley S.D."/>
            <person name="Brooks K."/>
            <person name="Cerdeno-Tarraga A.-M."/>
            <person name="Chillingworth T."/>
            <person name="Cronin A."/>
            <person name="Davies R.M."/>
            <person name="Davis P."/>
            <person name="Dougan G."/>
            <person name="Feltwell T."/>
            <person name="Hamlin N."/>
            <person name="Holroyd S."/>
            <person name="Jagels K."/>
            <person name="Karlyshev A.V."/>
            <person name="Leather S."/>
            <person name="Moule S."/>
            <person name="Oyston P.C.F."/>
            <person name="Quail M.A."/>
            <person name="Rutherford K.M."/>
            <person name="Simmonds M."/>
            <person name="Skelton J."/>
            <person name="Stevens K."/>
            <person name="Whitehead S."/>
            <person name="Barrell B.G."/>
        </authorList>
    </citation>
    <scope>NUCLEOTIDE SEQUENCE [LARGE SCALE GENOMIC DNA]</scope>
    <source>
        <strain>CO-92 / Biovar Orientalis</strain>
    </source>
</reference>
<reference key="2">
    <citation type="journal article" date="2002" name="J. Bacteriol.">
        <title>Genome sequence of Yersinia pestis KIM.</title>
        <authorList>
            <person name="Deng W."/>
            <person name="Burland V."/>
            <person name="Plunkett G. III"/>
            <person name="Boutin A."/>
            <person name="Mayhew G.F."/>
            <person name="Liss P."/>
            <person name="Perna N.T."/>
            <person name="Rose D.J."/>
            <person name="Mau B."/>
            <person name="Zhou S."/>
            <person name="Schwartz D.C."/>
            <person name="Fetherston J.D."/>
            <person name="Lindler L.E."/>
            <person name="Brubaker R.R."/>
            <person name="Plano G.V."/>
            <person name="Straley S.C."/>
            <person name="McDonough K.A."/>
            <person name="Nilles M.L."/>
            <person name="Matson J.S."/>
            <person name="Blattner F.R."/>
            <person name="Perry R.D."/>
        </authorList>
    </citation>
    <scope>NUCLEOTIDE SEQUENCE [LARGE SCALE GENOMIC DNA]</scope>
    <source>
        <strain>KIM10+ / Biovar Mediaevalis</strain>
    </source>
</reference>
<reference key="3">
    <citation type="journal article" date="2004" name="DNA Res.">
        <title>Complete genome sequence of Yersinia pestis strain 91001, an isolate avirulent to humans.</title>
        <authorList>
            <person name="Song Y."/>
            <person name="Tong Z."/>
            <person name="Wang J."/>
            <person name="Wang L."/>
            <person name="Guo Z."/>
            <person name="Han Y."/>
            <person name="Zhang J."/>
            <person name="Pei D."/>
            <person name="Zhou D."/>
            <person name="Qin H."/>
            <person name="Pang X."/>
            <person name="Han Y."/>
            <person name="Zhai J."/>
            <person name="Li M."/>
            <person name="Cui B."/>
            <person name="Qi Z."/>
            <person name="Jin L."/>
            <person name="Dai R."/>
            <person name="Chen F."/>
            <person name="Li S."/>
            <person name="Ye C."/>
            <person name="Du Z."/>
            <person name="Lin W."/>
            <person name="Wang J."/>
            <person name="Yu J."/>
            <person name="Yang H."/>
            <person name="Wang J."/>
            <person name="Huang P."/>
            <person name="Yang R."/>
        </authorList>
    </citation>
    <scope>NUCLEOTIDE SEQUENCE [LARGE SCALE GENOMIC DNA]</scope>
    <source>
        <strain>91001 / Biovar Mediaevalis</strain>
    </source>
</reference>
<feature type="chain" id="PRO_0000063031" description="Chaperone protein HtpG">
    <location>
        <begin position="1"/>
        <end position="622"/>
    </location>
</feature>
<feature type="region of interest" description="A; substrate-binding" evidence="1">
    <location>
        <begin position="1"/>
        <end position="334"/>
    </location>
</feature>
<feature type="region of interest" description="B" evidence="1">
    <location>
        <begin position="335"/>
        <end position="550"/>
    </location>
</feature>
<feature type="region of interest" description="C" evidence="1">
    <location>
        <begin position="551"/>
        <end position="622"/>
    </location>
</feature>
<gene>
    <name evidence="1" type="primary">htpG</name>
    <name type="ordered locus">YPO3119</name>
    <name type="ordered locus">y1064</name>
    <name type="ordered locus">YP_0811</name>
</gene>
<comment type="function">
    <text evidence="1">Molecular chaperone. Has ATPase activity.</text>
</comment>
<comment type="subunit">
    <text evidence="1">Homodimer.</text>
</comment>
<comment type="subcellular location">
    <subcellularLocation>
        <location evidence="1">Cytoplasm</location>
    </subcellularLocation>
</comment>
<comment type="similarity">
    <text evidence="1">Belongs to the heat shock protein 90 family.</text>
</comment>
<comment type="sequence caution" evidence="2">
    <conflict type="erroneous initiation">
        <sequence resource="EMBL-CDS" id="AAM84645"/>
    </conflict>
</comment>
<comment type="sequence caution" evidence="2">
    <conflict type="erroneous initiation">
        <sequence resource="EMBL-CDS" id="AAS61076"/>
    </conflict>
</comment>
<comment type="sequence caution" evidence="2">
    <conflict type="erroneous initiation">
        <sequence resource="EMBL-CDS" id="CAL21715"/>
    </conflict>
</comment>
<keyword id="KW-0067">ATP-binding</keyword>
<keyword id="KW-0143">Chaperone</keyword>
<keyword id="KW-0963">Cytoplasm</keyword>
<keyword id="KW-0547">Nucleotide-binding</keyword>
<keyword id="KW-1185">Reference proteome</keyword>
<keyword id="KW-0346">Stress response</keyword>
<organism>
    <name type="scientific">Yersinia pestis</name>
    <dbReference type="NCBI Taxonomy" id="632"/>
    <lineage>
        <taxon>Bacteria</taxon>
        <taxon>Pseudomonadati</taxon>
        <taxon>Pseudomonadota</taxon>
        <taxon>Gammaproteobacteria</taxon>
        <taxon>Enterobacterales</taxon>
        <taxon>Yersiniaceae</taxon>
        <taxon>Yersinia</taxon>
    </lineage>
</organism>
<evidence type="ECO:0000255" key="1">
    <source>
        <dbReference type="HAMAP-Rule" id="MF_00505"/>
    </source>
</evidence>
<evidence type="ECO:0000305" key="2"/>
<proteinExistence type="inferred from homology"/>